<proteinExistence type="inferred from homology"/>
<gene>
    <name evidence="1" type="primary">proB</name>
    <name type="ordered locus">Pro_0864</name>
</gene>
<keyword id="KW-0028">Amino-acid biosynthesis</keyword>
<keyword id="KW-0067">ATP-binding</keyword>
<keyword id="KW-0963">Cytoplasm</keyword>
<keyword id="KW-0418">Kinase</keyword>
<keyword id="KW-0547">Nucleotide-binding</keyword>
<keyword id="KW-0641">Proline biosynthesis</keyword>
<keyword id="KW-1185">Reference proteome</keyword>
<keyword id="KW-0808">Transferase</keyword>
<reference key="1">
    <citation type="journal article" date="2003" name="Proc. Natl. Acad. Sci. U.S.A.">
        <title>Genome sequence of the cyanobacterium Prochlorococcus marinus SS120, a nearly minimal oxyphototrophic genome.</title>
        <authorList>
            <person name="Dufresne A."/>
            <person name="Salanoubat M."/>
            <person name="Partensky F."/>
            <person name="Artiguenave F."/>
            <person name="Axmann I.M."/>
            <person name="Barbe V."/>
            <person name="Duprat S."/>
            <person name="Galperin M.Y."/>
            <person name="Koonin E.V."/>
            <person name="Le Gall F."/>
            <person name="Makarova K.S."/>
            <person name="Ostrowski M."/>
            <person name="Oztas S."/>
            <person name="Robert C."/>
            <person name="Rogozin I.B."/>
            <person name="Scanlan D.J."/>
            <person name="Tandeau de Marsac N."/>
            <person name="Weissenbach J."/>
            <person name="Wincker P."/>
            <person name="Wolf Y.I."/>
            <person name="Hess W.R."/>
        </authorList>
    </citation>
    <scope>NUCLEOTIDE SEQUENCE [LARGE SCALE GENOMIC DNA]</scope>
    <source>
        <strain>SARG / CCMP1375 / SS120</strain>
    </source>
</reference>
<organism>
    <name type="scientific">Prochlorococcus marinus (strain SARG / CCMP1375 / SS120)</name>
    <dbReference type="NCBI Taxonomy" id="167539"/>
    <lineage>
        <taxon>Bacteria</taxon>
        <taxon>Bacillati</taxon>
        <taxon>Cyanobacteriota</taxon>
        <taxon>Cyanophyceae</taxon>
        <taxon>Synechococcales</taxon>
        <taxon>Prochlorococcaceae</taxon>
        <taxon>Prochlorococcus</taxon>
    </lineage>
</organism>
<evidence type="ECO:0000255" key="1">
    <source>
        <dbReference type="HAMAP-Rule" id="MF_00456"/>
    </source>
</evidence>
<name>PROB_PROMA</name>
<feature type="chain" id="PRO_0000109706" description="Glutamate 5-kinase">
    <location>
        <begin position="1"/>
        <end position="364"/>
    </location>
</feature>
<feature type="domain" description="PUA" evidence="1">
    <location>
        <begin position="274"/>
        <end position="349"/>
    </location>
</feature>
<feature type="binding site" evidence="1">
    <location>
        <position position="7"/>
    </location>
    <ligand>
        <name>ATP</name>
        <dbReference type="ChEBI" id="CHEBI:30616"/>
    </ligand>
</feature>
<feature type="binding site" evidence="1">
    <location>
        <position position="47"/>
    </location>
    <ligand>
        <name>substrate</name>
    </ligand>
</feature>
<feature type="binding site" evidence="1">
    <location>
        <position position="134"/>
    </location>
    <ligand>
        <name>substrate</name>
    </ligand>
</feature>
<feature type="binding site" evidence="1">
    <location>
        <position position="146"/>
    </location>
    <ligand>
        <name>substrate</name>
    </ligand>
</feature>
<feature type="binding site" evidence="1">
    <location>
        <begin position="166"/>
        <end position="167"/>
    </location>
    <ligand>
        <name>ATP</name>
        <dbReference type="ChEBI" id="CHEBI:30616"/>
    </ligand>
</feature>
<feature type="binding site" evidence="1">
    <location>
        <begin position="209"/>
        <end position="215"/>
    </location>
    <ligand>
        <name>ATP</name>
        <dbReference type="ChEBI" id="CHEBI:30616"/>
    </ligand>
</feature>
<dbReference type="EC" id="2.7.2.11" evidence="1"/>
<dbReference type="EMBL" id="AE017126">
    <property type="protein sequence ID" value="AAP99908.1"/>
    <property type="molecule type" value="Genomic_DNA"/>
</dbReference>
<dbReference type="RefSeq" id="NP_875256.1">
    <property type="nucleotide sequence ID" value="NC_005042.1"/>
</dbReference>
<dbReference type="RefSeq" id="WP_011125016.1">
    <property type="nucleotide sequence ID" value="NC_005042.1"/>
</dbReference>
<dbReference type="SMR" id="Q7VC78"/>
<dbReference type="STRING" id="167539.Pro_0864"/>
<dbReference type="EnsemblBacteria" id="AAP99908">
    <property type="protein sequence ID" value="AAP99908"/>
    <property type="gene ID" value="Pro_0864"/>
</dbReference>
<dbReference type="KEGG" id="pma:Pro_0864"/>
<dbReference type="PATRIC" id="fig|167539.5.peg.913"/>
<dbReference type="eggNOG" id="COG0263">
    <property type="taxonomic scope" value="Bacteria"/>
</dbReference>
<dbReference type="HOGENOM" id="CLU_025400_2_0_3"/>
<dbReference type="OrthoDB" id="9804434at2"/>
<dbReference type="UniPathway" id="UPA00098">
    <property type="reaction ID" value="UER00359"/>
</dbReference>
<dbReference type="Proteomes" id="UP000001420">
    <property type="component" value="Chromosome"/>
</dbReference>
<dbReference type="GO" id="GO:0005829">
    <property type="term" value="C:cytosol"/>
    <property type="evidence" value="ECO:0007669"/>
    <property type="project" value="TreeGrafter"/>
</dbReference>
<dbReference type="GO" id="GO:0005524">
    <property type="term" value="F:ATP binding"/>
    <property type="evidence" value="ECO:0007669"/>
    <property type="project" value="UniProtKB-KW"/>
</dbReference>
<dbReference type="GO" id="GO:0004349">
    <property type="term" value="F:glutamate 5-kinase activity"/>
    <property type="evidence" value="ECO:0007669"/>
    <property type="project" value="UniProtKB-UniRule"/>
</dbReference>
<dbReference type="GO" id="GO:0003723">
    <property type="term" value="F:RNA binding"/>
    <property type="evidence" value="ECO:0007669"/>
    <property type="project" value="InterPro"/>
</dbReference>
<dbReference type="GO" id="GO:0055129">
    <property type="term" value="P:L-proline biosynthetic process"/>
    <property type="evidence" value="ECO:0007669"/>
    <property type="project" value="UniProtKB-UniRule"/>
</dbReference>
<dbReference type="CDD" id="cd04242">
    <property type="entry name" value="AAK_G5K_ProB"/>
    <property type="match status" value="1"/>
</dbReference>
<dbReference type="CDD" id="cd21157">
    <property type="entry name" value="PUA_G5K"/>
    <property type="match status" value="1"/>
</dbReference>
<dbReference type="FunFam" id="3.40.1160.10:FF:000018">
    <property type="entry name" value="Glutamate 5-kinase"/>
    <property type="match status" value="1"/>
</dbReference>
<dbReference type="Gene3D" id="3.40.1160.10">
    <property type="entry name" value="Acetylglutamate kinase-like"/>
    <property type="match status" value="1"/>
</dbReference>
<dbReference type="Gene3D" id="2.30.130.10">
    <property type="entry name" value="PUA domain"/>
    <property type="match status" value="1"/>
</dbReference>
<dbReference type="HAMAP" id="MF_00456">
    <property type="entry name" value="ProB"/>
    <property type="match status" value="1"/>
</dbReference>
<dbReference type="InterPro" id="IPR036393">
    <property type="entry name" value="AceGlu_kinase-like_sf"/>
</dbReference>
<dbReference type="InterPro" id="IPR001048">
    <property type="entry name" value="Asp/Glu/Uridylate_kinase"/>
</dbReference>
<dbReference type="InterPro" id="IPR041739">
    <property type="entry name" value="G5K_ProB"/>
</dbReference>
<dbReference type="InterPro" id="IPR001057">
    <property type="entry name" value="Glu/AcGlu_kinase"/>
</dbReference>
<dbReference type="InterPro" id="IPR011529">
    <property type="entry name" value="Glu_5kinase"/>
</dbReference>
<dbReference type="InterPro" id="IPR005715">
    <property type="entry name" value="Glu_5kinase/COase_Synthase"/>
</dbReference>
<dbReference type="InterPro" id="IPR019797">
    <property type="entry name" value="Glutamate_5-kinase_CS"/>
</dbReference>
<dbReference type="InterPro" id="IPR002478">
    <property type="entry name" value="PUA"/>
</dbReference>
<dbReference type="InterPro" id="IPR015947">
    <property type="entry name" value="PUA-like_sf"/>
</dbReference>
<dbReference type="InterPro" id="IPR036974">
    <property type="entry name" value="PUA_sf"/>
</dbReference>
<dbReference type="NCBIfam" id="TIGR01027">
    <property type="entry name" value="proB"/>
    <property type="match status" value="1"/>
</dbReference>
<dbReference type="PANTHER" id="PTHR43654">
    <property type="entry name" value="GLUTAMATE 5-KINASE"/>
    <property type="match status" value="1"/>
</dbReference>
<dbReference type="PANTHER" id="PTHR43654:SF3">
    <property type="entry name" value="GLUTAMATE 5-KINASE"/>
    <property type="match status" value="1"/>
</dbReference>
<dbReference type="Pfam" id="PF00696">
    <property type="entry name" value="AA_kinase"/>
    <property type="match status" value="1"/>
</dbReference>
<dbReference type="Pfam" id="PF01472">
    <property type="entry name" value="PUA"/>
    <property type="match status" value="1"/>
</dbReference>
<dbReference type="PIRSF" id="PIRSF000729">
    <property type="entry name" value="GK"/>
    <property type="match status" value="1"/>
</dbReference>
<dbReference type="PRINTS" id="PR00474">
    <property type="entry name" value="GLU5KINASE"/>
</dbReference>
<dbReference type="SMART" id="SM00359">
    <property type="entry name" value="PUA"/>
    <property type="match status" value="1"/>
</dbReference>
<dbReference type="SUPFAM" id="SSF53633">
    <property type="entry name" value="Carbamate kinase-like"/>
    <property type="match status" value="1"/>
</dbReference>
<dbReference type="SUPFAM" id="SSF88697">
    <property type="entry name" value="PUA domain-like"/>
    <property type="match status" value="1"/>
</dbReference>
<dbReference type="PROSITE" id="PS00902">
    <property type="entry name" value="GLUTAMATE_5_KINASE"/>
    <property type="match status" value="1"/>
</dbReference>
<dbReference type="PROSITE" id="PS50890">
    <property type="entry name" value="PUA"/>
    <property type="match status" value="1"/>
</dbReference>
<accession>Q7VC78</accession>
<comment type="function">
    <text evidence="1">Catalyzes the transfer of a phosphate group to glutamate to form L-glutamate 5-phosphate.</text>
</comment>
<comment type="catalytic activity">
    <reaction evidence="1">
        <text>L-glutamate + ATP = L-glutamyl 5-phosphate + ADP</text>
        <dbReference type="Rhea" id="RHEA:14877"/>
        <dbReference type="ChEBI" id="CHEBI:29985"/>
        <dbReference type="ChEBI" id="CHEBI:30616"/>
        <dbReference type="ChEBI" id="CHEBI:58274"/>
        <dbReference type="ChEBI" id="CHEBI:456216"/>
        <dbReference type="EC" id="2.7.2.11"/>
    </reaction>
</comment>
<comment type="pathway">
    <text evidence="1">Amino-acid biosynthesis; L-proline biosynthesis; L-glutamate 5-semialdehyde from L-glutamate: step 1/2.</text>
</comment>
<comment type="subcellular location">
    <subcellularLocation>
        <location evidence="1">Cytoplasm</location>
    </subcellularLocation>
</comment>
<comment type="similarity">
    <text evidence="1">Belongs to the glutamate 5-kinase family.</text>
</comment>
<protein>
    <recommendedName>
        <fullName evidence="1">Glutamate 5-kinase</fullName>
        <ecNumber evidence="1">2.7.2.11</ecNumber>
    </recommendedName>
    <alternativeName>
        <fullName evidence="1">Gamma-glutamyl kinase</fullName>
        <shortName evidence="1">GK</shortName>
    </alternativeName>
</protein>
<sequence>MTLWTIKIGTSLLRGNKEFSTNKIIETYCGFIAESKAKGDQVIIVSSGAVGLGCNRLGLKVRPNDLNSLQAAAAVGQGYLMSLYESAMKKYGYNVAQILLTRSDFESKRCFKNASLTIKKLLDWKVLPIINENDSIANEELRYGDNDTLSALVSTAISADQLVLLTDIDKLYSSDPKFDKDAKPITDVHSSNEIIQIQSNSNESNNWGTGGIKTKLTAAQIATKNGITVHLADGREPKILKDILKGSRGGTVFHPNPKPIGTMKSWLAHALYPQGTLHVDDGAYNAIQNKGASLLIVGIINIDGDFAKNQPVKIVNLEGIEIAKGISSISSESIRRFINNRIKSTQYPVVVHRDVLVLSSELLI</sequence>